<organism>
    <name type="scientific">Streptococcus pneumoniae serotype 2 (strain D39 / NCTC 7466)</name>
    <dbReference type="NCBI Taxonomy" id="373153"/>
    <lineage>
        <taxon>Bacteria</taxon>
        <taxon>Bacillati</taxon>
        <taxon>Bacillota</taxon>
        <taxon>Bacilli</taxon>
        <taxon>Lactobacillales</taxon>
        <taxon>Streptococcaceae</taxon>
        <taxon>Streptococcus</taxon>
    </lineage>
</organism>
<feature type="chain" id="PRO_1000080843" description="Transcriptional repressor NrdR">
    <location>
        <begin position="1"/>
        <end position="157"/>
    </location>
</feature>
<feature type="domain" description="ATP-cone" evidence="1">
    <location>
        <begin position="49"/>
        <end position="139"/>
    </location>
</feature>
<feature type="zinc finger region" evidence="1">
    <location>
        <begin position="3"/>
        <end position="34"/>
    </location>
</feature>
<feature type="region of interest" description="Disordered" evidence="2">
    <location>
        <begin position="1"/>
        <end position="22"/>
    </location>
</feature>
<reference key="1">
    <citation type="journal article" date="2007" name="J. Bacteriol.">
        <title>Genome sequence of Avery's virulent serotype 2 strain D39 of Streptococcus pneumoniae and comparison with that of unencapsulated laboratory strain R6.</title>
        <authorList>
            <person name="Lanie J.A."/>
            <person name="Ng W.-L."/>
            <person name="Kazmierczak K.M."/>
            <person name="Andrzejewski T.M."/>
            <person name="Davidsen T.M."/>
            <person name="Wayne K.J."/>
            <person name="Tettelin H."/>
            <person name="Glass J.I."/>
            <person name="Winkler M.E."/>
        </authorList>
    </citation>
    <scope>NUCLEOTIDE SEQUENCE [LARGE SCALE GENOMIC DNA]</scope>
    <source>
        <strain>D39 / NCTC 7466</strain>
    </source>
</reference>
<proteinExistence type="inferred from homology"/>
<dbReference type="EMBL" id="CP000410">
    <property type="protein sequence ID" value="ABJ55026.1"/>
    <property type="molecule type" value="Genomic_DNA"/>
</dbReference>
<dbReference type="RefSeq" id="WP_001203672.1">
    <property type="nucleotide sequence ID" value="NZ_JAMLJR010000003.1"/>
</dbReference>
<dbReference type="SMR" id="Q04J60"/>
<dbReference type="PaxDb" id="373153-SPD_1523"/>
<dbReference type="GeneID" id="93740109"/>
<dbReference type="KEGG" id="spd:SPD_1523"/>
<dbReference type="eggNOG" id="COG1327">
    <property type="taxonomic scope" value="Bacteria"/>
</dbReference>
<dbReference type="HOGENOM" id="CLU_108412_0_0_9"/>
<dbReference type="BioCyc" id="SPNE373153:G1G6V-1645-MONOMER"/>
<dbReference type="Proteomes" id="UP000001452">
    <property type="component" value="Chromosome"/>
</dbReference>
<dbReference type="GO" id="GO:0005524">
    <property type="term" value="F:ATP binding"/>
    <property type="evidence" value="ECO:0007669"/>
    <property type="project" value="UniProtKB-KW"/>
</dbReference>
<dbReference type="GO" id="GO:0003677">
    <property type="term" value="F:DNA binding"/>
    <property type="evidence" value="ECO:0007669"/>
    <property type="project" value="UniProtKB-KW"/>
</dbReference>
<dbReference type="GO" id="GO:0008270">
    <property type="term" value="F:zinc ion binding"/>
    <property type="evidence" value="ECO:0007669"/>
    <property type="project" value="UniProtKB-UniRule"/>
</dbReference>
<dbReference type="GO" id="GO:0045892">
    <property type="term" value="P:negative regulation of DNA-templated transcription"/>
    <property type="evidence" value="ECO:0007669"/>
    <property type="project" value="UniProtKB-UniRule"/>
</dbReference>
<dbReference type="HAMAP" id="MF_00440">
    <property type="entry name" value="NrdR"/>
    <property type="match status" value="1"/>
</dbReference>
<dbReference type="InterPro" id="IPR005144">
    <property type="entry name" value="ATP-cone_dom"/>
</dbReference>
<dbReference type="InterPro" id="IPR055173">
    <property type="entry name" value="NrdR-like_N"/>
</dbReference>
<dbReference type="InterPro" id="IPR003796">
    <property type="entry name" value="RNR_NrdR-like"/>
</dbReference>
<dbReference type="NCBIfam" id="TIGR00244">
    <property type="entry name" value="transcriptional regulator NrdR"/>
    <property type="match status" value="1"/>
</dbReference>
<dbReference type="PANTHER" id="PTHR30455">
    <property type="entry name" value="TRANSCRIPTIONAL REPRESSOR NRDR"/>
    <property type="match status" value="1"/>
</dbReference>
<dbReference type="PANTHER" id="PTHR30455:SF2">
    <property type="entry name" value="TRANSCRIPTIONAL REPRESSOR NRDR"/>
    <property type="match status" value="1"/>
</dbReference>
<dbReference type="Pfam" id="PF03477">
    <property type="entry name" value="ATP-cone"/>
    <property type="match status" value="1"/>
</dbReference>
<dbReference type="Pfam" id="PF22811">
    <property type="entry name" value="Zn_ribbon_NrdR"/>
    <property type="match status" value="1"/>
</dbReference>
<dbReference type="PROSITE" id="PS51161">
    <property type="entry name" value="ATP_CONE"/>
    <property type="match status" value="1"/>
</dbReference>
<gene>
    <name evidence="1" type="primary">nrdR</name>
    <name type="ordered locus">SPD_1523</name>
</gene>
<protein>
    <recommendedName>
        <fullName evidence="1">Transcriptional repressor NrdR</fullName>
    </recommendedName>
</protein>
<accession>Q04J60</accession>
<comment type="function">
    <text evidence="1">Negatively regulates transcription of bacterial ribonucleotide reductase nrd genes and operons by binding to NrdR-boxes.</text>
</comment>
<comment type="cofactor">
    <cofactor evidence="1">
        <name>Zn(2+)</name>
        <dbReference type="ChEBI" id="CHEBI:29105"/>
    </cofactor>
    <text evidence="1">Binds 1 zinc ion.</text>
</comment>
<comment type="similarity">
    <text evidence="1">Belongs to the NrdR family.</text>
</comment>
<keyword id="KW-0067">ATP-binding</keyword>
<keyword id="KW-0238">DNA-binding</keyword>
<keyword id="KW-0479">Metal-binding</keyword>
<keyword id="KW-0547">Nucleotide-binding</keyword>
<keyword id="KW-1185">Reference proteome</keyword>
<keyword id="KW-0678">Repressor</keyword>
<keyword id="KW-0804">Transcription</keyword>
<keyword id="KW-0805">Transcription regulation</keyword>
<keyword id="KW-0862">Zinc</keyword>
<keyword id="KW-0863">Zinc-finger</keyword>
<sequence>MRCPKCGATKSSVIDSRQAEEGNTIRRRRECDECQHRFTTYERVEERTLVVVKKDGTREQFSRDKIFNGIIRSAQKRPVSSDEINMVVNRIEQKLRGRNENEIQSEDIGSLVMEELAELDEITYVRFASVYRSFKDVSELESLLQQITQSSKKKKER</sequence>
<evidence type="ECO:0000255" key="1">
    <source>
        <dbReference type="HAMAP-Rule" id="MF_00440"/>
    </source>
</evidence>
<evidence type="ECO:0000256" key="2">
    <source>
        <dbReference type="SAM" id="MobiDB-lite"/>
    </source>
</evidence>
<name>NRDR_STRP2</name>